<reference key="1">
    <citation type="journal article" date="2008" name="Chem. Biol. Interact.">
        <title>Extending the Bacillus cereus group genomics to putative food-borne pathogens of different toxicity.</title>
        <authorList>
            <person name="Lapidus A."/>
            <person name="Goltsman E."/>
            <person name="Auger S."/>
            <person name="Galleron N."/>
            <person name="Segurens B."/>
            <person name="Dossat C."/>
            <person name="Land M.L."/>
            <person name="Broussolle V."/>
            <person name="Brillard J."/>
            <person name="Guinebretiere M.-H."/>
            <person name="Sanchis V."/>
            <person name="Nguen-the C."/>
            <person name="Lereclus D."/>
            <person name="Richardson P."/>
            <person name="Wincker P."/>
            <person name="Weissenbach J."/>
            <person name="Ehrlich S.D."/>
            <person name="Sorokin A."/>
        </authorList>
    </citation>
    <scope>NUCLEOTIDE SEQUENCE [LARGE SCALE GENOMIC DNA]</scope>
    <source>
        <strain>KBAB4</strain>
    </source>
</reference>
<organism>
    <name type="scientific">Bacillus mycoides (strain KBAB4)</name>
    <name type="common">Bacillus weihenstephanensis</name>
    <dbReference type="NCBI Taxonomy" id="315730"/>
    <lineage>
        <taxon>Bacteria</taxon>
        <taxon>Bacillati</taxon>
        <taxon>Bacillota</taxon>
        <taxon>Bacilli</taxon>
        <taxon>Bacillales</taxon>
        <taxon>Bacillaceae</taxon>
        <taxon>Bacillus</taxon>
        <taxon>Bacillus cereus group</taxon>
    </lineage>
</organism>
<feature type="chain" id="PRO_1000132741" description="2-succinylbenzoate--CoA ligase">
    <location>
        <begin position="1"/>
        <end position="481"/>
    </location>
</feature>
<comment type="function">
    <text evidence="1">Converts 2-succinylbenzoate (OSB) to 2-succinylbenzoyl-CoA (OSB-CoA).</text>
</comment>
<comment type="catalytic activity">
    <reaction evidence="1">
        <text>2-succinylbenzoate + ATP + CoA = 2-succinylbenzoyl-CoA + AMP + diphosphate</text>
        <dbReference type="Rhea" id="RHEA:17009"/>
        <dbReference type="ChEBI" id="CHEBI:18325"/>
        <dbReference type="ChEBI" id="CHEBI:30616"/>
        <dbReference type="ChEBI" id="CHEBI:33019"/>
        <dbReference type="ChEBI" id="CHEBI:57287"/>
        <dbReference type="ChEBI" id="CHEBI:57364"/>
        <dbReference type="ChEBI" id="CHEBI:456215"/>
        <dbReference type="EC" id="6.2.1.26"/>
    </reaction>
</comment>
<comment type="pathway">
    <text evidence="1">Quinol/quinone metabolism; 1,4-dihydroxy-2-naphthoate biosynthesis; 1,4-dihydroxy-2-naphthoate from chorismate: step 5/7.</text>
</comment>
<comment type="pathway">
    <text evidence="1">Quinol/quinone metabolism; menaquinone biosynthesis.</text>
</comment>
<comment type="similarity">
    <text evidence="1">Belongs to the ATP-dependent AMP-binding enzyme family. MenE subfamily.</text>
</comment>
<protein>
    <recommendedName>
        <fullName evidence="1">2-succinylbenzoate--CoA ligase</fullName>
        <ecNumber evidence="1">6.2.1.26</ecNumber>
    </recommendedName>
    <alternativeName>
        <fullName evidence="1">o-succinylbenzoyl-CoA synthetase</fullName>
        <shortName evidence="1">OSB-CoA synthetase</shortName>
    </alternativeName>
</protein>
<name>MENE_BACMK</name>
<keyword id="KW-0067">ATP-binding</keyword>
<keyword id="KW-0436">Ligase</keyword>
<keyword id="KW-0474">Menaquinone biosynthesis</keyword>
<keyword id="KW-0547">Nucleotide-binding</keyword>
<evidence type="ECO:0000255" key="1">
    <source>
        <dbReference type="HAMAP-Rule" id="MF_00731"/>
    </source>
</evidence>
<proteinExistence type="inferred from homology"/>
<dbReference type="EC" id="6.2.1.26" evidence="1"/>
<dbReference type="EMBL" id="CP000903">
    <property type="protein sequence ID" value="ABY45847.1"/>
    <property type="molecule type" value="Genomic_DNA"/>
</dbReference>
<dbReference type="RefSeq" id="WP_012261898.1">
    <property type="nucleotide sequence ID" value="NC_010184.1"/>
</dbReference>
<dbReference type="SMR" id="A9VM74"/>
<dbReference type="KEGG" id="bwe:BcerKBAB4_4694"/>
<dbReference type="eggNOG" id="COG0318">
    <property type="taxonomic scope" value="Bacteria"/>
</dbReference>
<dbReference type="HOGENOM" id="CLU_000022_59_0_9"/>
<dbReference type="UniPathway" id="UPA00079"/>
<dbReference type="UniPathway" id="UPA01057">
    <property type="reaction ID" value="UER00166"/>
</dbReference>
<dbReference type="Proteomes" id="UP000002154">
    <property type="component" value="Chromosome"/>
</dbReference>
<dbReference type="GO" id="GO:0005524">
    <property type="term" value="F:ATP binding"/>
    <property type="evidence" value="ECO:0007669"/>
    <property type="project" value="UniProtKB-KW"/>
</dbReference>
<dbReference type="GO" id="GO:0008756">
    <property type="term" value="F:o-succinylbenzoate-CoA ligase activity"/>
    <property type="evidence" value="ECO:0007669"/>
    <property type="project" value="UniProtKB-UniRule"/>
</dbReference>
<dbReference type="GO" id="GO:0009234">
    <property type="term" value="P:menaquinone biosynthetic process"/>
    <property type="evidence" value="ECO:0007669"/>
    <property type="project" value="UniProtKB-UniRule"/>
</dbReference>
<dbReference type="CDD" id="cd05912">
    <property type="entry name" value="OSB_CoA_lg"/>
    <property type="match status" value="1"/>
</dbReference>
<dbReference type="FunFam" id="3.30.300.30:FF:000008">
    <property type="entry name" value="2,3-dihydroxybenzoate-AMP ligase"/>
    <property type="match status" value="1"/>
</dbReference>
<dbReference type="Gene3D" id="3.30.300.30">
    <property type="match status" value="1"/>
</dbReference>
<dbReference type="Gene3D" id="3.40.50.12780">
    <property type="entry name" value="N-terminal domain of ligase-like"/>
    <property type="match status" value="1"/>
</dbReference>
<dbReference type="HAMAP" id="MF_00731">
    <property type="entry name" value="MenE"/>
    <property type="match status" value="1"/>
</dbReference>
<dbReference type="InterPro" id="IPR025110">
    <property type="entry name" value="AMP-bd_C"/>
</dbReference>
<dbReference type="InterPro" id="IPR045851">
    <property type="entry name" value="AMP-bd_C_sf"/>
</dbReference>
<dbReference type="InterPro" id="IPR020845">
    <property type="entry name" value="AMP-binding_CS"/>
</dbReference>
<dbReference type="InterPro" id="IPR000873">
    <property type="entry name" value="AMP-dep_synth/lig_dom"/>
</dbReference>
<dbReference type="InterPro" id="IPR042099">
    <property type="entry name" value="ANL_N_sf"/>
</dbReference>
<dbReference type="InterPro" id="IPR050237">
    <property type="entry name" value="ATP-dep_AMP-bd_enzyme"/>
</dbReference>
<dbReference type="InterPro" id="IPR010192">
    <property type="entry name" value="MenE"/>
</dbReference>
<dbReference type="NCBIfam" id="TIGR01923">
    <property type="entry name" value="menE"/>
    <property type="match status" value="1"/>
</dbReference>
<dbReference type="NCBIfam" id="NF002966">
    <property type="entry name" value="PRK03640.1"/>
    <property type="match status" value="1"/>
</dbReference>
<dbReference type="PANTHER" id="PTHR43767">
    <property type="entry name" value="LONG-CHAIN-FATTY-ACID--COA LIGASE"/>
    <property type="match status" value="1"/>
</dbReference>
<dbReference type="PANTHER" id="PTHR43767:SF1">
    <property type="entry name" value="NONRIBOSOMAL PEPTIDE SYNTHASE PES1 (EUROFUNG)-RELATED"/>
    <property type="match status" value="1"/>
</dbReference>
<dbReference type="Pfam" id="PF00501">
    <property type="entry name" value="AMP-binding"/>
    <property type="match status" value="1"/>
</dbReference>
<dbReference type="Pfam" id="PF13193">
    <property type="entry name" value="AMP-binding_C"/>
    <property type="match status" value="1"/>
</dbReference>
<dbReference type="SUPFAM" id="SSF56801">
    <property type="entry name" value="Acetyl-CoA synthetase-like"/>
    <property type="match status" value="1"/>
</dbReference>
<dbReference type="PROSITE" id="PS00455">
    <property type="entry name" value="AMP_BINDING"/>
    <property type="match status" value="1"/>
</dbReference>
<accession>A9VM74</accession>
<gene>
    <name evidence="1" type="primary">menE</name>
    <name type="ordered locus">BcerKBAB4_4694</name>
</gene>
<sequence>METMPNWLMQRAFLTPDRTAIEIEEEKVTFVQLHEKVVSVCEHLTHVGVKRAQKVAVLMKNGMEMITVIHALSYIGAVAVLLNTRLSREELLWQMDDAEVVCLVTDQEFETENVPVCSFAEVMQGPKAEAFIQEEFSLEEAMTIIYTSGTTGKPKGVILTYGNHWASAVGSSLNLGLRDDDCWLACMPMFHVGGLSLLMKNIMYGMRILLVPKYDANFIHKALQTRGVTIISVVSKMLTDLLERLGEGTYPSSLRCMLLGGGPAPKPLLETCVEKGIPVYQTYGMTETSSQICTLTADYMLTKVGSAGKPLFQCQLRIEKDGVVVPPRAEGEIVVKGPNVTGGYFNREDATHEAIRNGWLHTGDLGYLDEEGFLYVLDRRSDLIISGGENIYPAQIEEVLLSHPAVVEAGVVGMADESWGQVPAAFVVKSGDVTEEEIIRFCEEKLAKYKVPKKACFLEELPRNASKKLLRRELRKLVEEM</sequence>